<feature type="chain" id="PRO_0000437597" description="O-methyltransferase hmp5">
    <location>
        <begin position="1"/>
        <end position="398"/>
    </location>
</feature>
<feature type="active site" description="Proton acceptor" evidence="2">
    <location>
        <position position="303"/>
    </location>
</feature>
<feature type="binding site" evidence="1">
    <location>
        <begin position="233"/>
        <end position="234"/>
    </location>
    <ligand>
        <name>S-adenosyl-L-methionine</name>
        <dbReference type="ChEBI" id="CHEBI:59789"/>
    </ligand>
</feature>
<feature type="binding site" evidence="2">
    <location>
        <position position="261"/>
    </location>
    <ligand>
        <name>S-adenosyl-L-methionine</name>
        <dbReference type="ChEBI" id="CHEBI:59789"/>
    </ligand>
</feature>
<feature type="binding site" evidence="1">
    <location>
        <begin position="283"/>
        <end position="284"/>
    </location>
    <ligand>
        <name>S-adenosyl-L-methionine</name>
        <dbReference type="ChEBI" id="CHEBI:59789"/>
    </ligand>
</feature>
<keyword id="KW-0489">Methyltransferase</keyword>
<keyword id="KW-0949">S-adenosyl-L-methionine</keyword>
<keyword id="KW-0808">Transferase</keyword>
<dbReference type="EC" id="2.1.1.-" evidence="6"/>
<dbReference type="EMBL" id="EU520417">
    <property type="protein sequence ID" value="ACD39755.1"/>
    <property type="molecule type" value="Genomic_DNA"/>
</dbReference>
<dbReference type="EMBL" id="EU520418">
    <property type="protein sequence ID" value="ACD39764.1"/>
    <property type="molecule type" value="Genomic_DNA"/>
</dbReference>
<dbReference type="SMR" id="B3FWS1"/>
<dbReference type="GO" id="GO:0008171">
    <property type="term" value="F:O-methyltransferase activity"/>
    <property type="evidence" value="ECO:0007669"/>
    <property type="project" value="InterPro"/>
</dbReference>
<dbReference type="GO" id="GO:0046983">
    <property type="term" value="F:protein dimerization activity"/>
    <property type="evidence" value="ECO:0007669"/>
    <property type="project" value="InterPro"/>
</dbReference>
<dbReference type="GO" id="GO:0032259">
    <property type="term" value="P:methylation"/>
    <property type="evidence" value="ECO:0007669"/>
    <property type="project" value="UniProtKB-KW"/>
</dbReference>
<dbReference type="GO" id="GO:0044550">
    <property type="term" value="P:secondary metabolite biosynthetic process"/>
    <property type="evidence" value="ECO:0007669"/>
    <property type="project" value="UniProtKB-ARBA"/>
</dbReference>
<dbReference type="Gene3D" id="3.40.50.150">
    <property type="entry name" value="Vaccinia Virus protein VP39"/>
    <property type="match status" value="1"/>
</dbReference>
<dbReference type="Gene3D" id="1.10.10.10">
    <property type="entry name" value="Winged helix-like DNA-binding domain superfamily/Winged helix DNA-binding domain"/>
    <property type="match status" value="1"/>
</dbReference>
<dbReference type="InterPro" id="IPR016461">
    <property type="entry name" value="COMT-like"/>
</dbReference>
<dbReference type="InterPro" id="IPR001077">
    <property type="entry name" value="O_MeTrfase_dom"/>
</dbReference>
<dbReference type="InterPro" id="IPR012967">
    <property type="entry name" value="Plant_O-MeTrfase_dimerisation"/>
</dbReference>
<dbReference type="InterPro" id="IPR029063">
    <property type="entry name" value="SAM-dependent_MTases_sf"/>
</dbReference>
<dbReference type="InterPro" id="IPR036388">
    <property type="entry name" value="WH-like_DNA-bd_sf"/>
</dbReference>
<dbReference type="InterPro" id="IPR036390">
    <property type="entry name" value="WH_DNA-bd_sf"/>
</dbReference>
<dbReference type="PANTHER" id="PTHR43712:SF18">
    <property type="entry name" value="PUTATIVE (AFU_ORTHOLOGUE AFUA_4G14240)-RELATED"/>
    <property type="match status" value="1"/>
</dbReference>
<dbReference type="PANTHER" id="PTHR43712">
    <property type="entry name" value="PUTATIVE (AFU_ORTHOLOGUE AFUA_4G14580)-RELATED"/>
    <property type="match status" value="1"/>
</dbReference>
<dbReference type="Pfam" id="PF08100">
    <property type="entry name" value="Dimerisation"/>
    <property type="match status" value="1"/>
</dbReference>
<dbReference type="Pfam" id="PF00891">
    <property type="entry name" value="Methyltransf_2"/>
    <property type="match status" value="1"/>
</dbReference>
<dbReference type="PIRSF" id="PIRSF005739">
    <property type="entry name" value="O-mtase"/>
    <property type="match status" value="1"/>
</dbReference>
<dbReference type="SUPFAM" id="SSF53335">
    <property type="entry name" value="S-adenosyl-L-methionine-dependent methyltransferases"/>
    <property type="match status" value="1"/>
</dbReference>
<dbReference type="SUPFAM" id="SSF46785">
    <property type="entry name" value="Winged helix' DNA-binding domain"/>
    <property type="match status" value="1"/>
</dbReference>
<dbReference type="PROSITE" id="PS51683">
    <property type="entry name" value="SAM_OMT_II"/>
    <property type="match status" value="1"/>
</dbReference>
<evidence type="ECO:0000250" key="1">
    <source>
        <dbReference type="UniProtKB" id="O04385"/>
    </source>
</evidence>
<evidence type="ECO:0000255" key="2">
    <source>
        <dbReference type="PROSITE-ProRule" id="PRU01020"/>
    </source>
</evidence>
<evidence type="ECO:0000269" key="3">
    <source>
    </source>
</evidence>
<evidence type="ECO:0000269" key="4">
    <source>
    </source>
</evidence>
<evidence type="ECO:0000269" key="5">
    <source>
    </source>
</evidence>
<evidence type="ECO:0000269" key="6">
    <source>
    </source>
</evidence>
<evidence type="ECO:0000269" key="7">
    <source>
    </source>
</evidence>
<evidence type="ECO:0000269" key="8">
    <source>
    </source>
</evidence>
<evidence type="ECO:0000269" key="9">
    <source>
    </source>
</evidence>
<evidence type="ECO:0000269" key="10">
    <source>
    </source>
</evidence>
<evidence type="ECO:0000269" key="11">
    <source>
    </source>
</evidence>
<evidence type="ECO:0000269" key="12">
    <source>
    </source>
</evidence>
<evidence type="ECO:0000303" key="13">
    <source>
    </source>
</evidence>
<name>HPM5_HYPSB</name>
<accession>B3FWS1</accession>
<reference key="1">
    <citation type="journal article" date="2008" name="Appl. Environ. Microbiol.">
        <title>Genes for the biosynthesis of the fungal polyketides hypothemycin from Hypomyces subiculosus and radicicol from Pochonia chlamydosporia.</title>
        <authorList>
            <person name="Reeves C.D."/>
            <person name="Hu Z."/>
            <person name="Reid R."/>
            <person name="Kealey J.T."/>
        </authorList>
    </citation>
    <scope>NUCLEOTIDE SEQUENCE [GENOMIC DNA]</scope>
    <scope>FUNCTION</scope>
    <scope>CATALYTIC ACTIVITY</scope>
    <scope>DISRUPTION PHENOTYPE</scope>
    <source>
        <strain>DSM11931</strain>
        <strain>DSM11932</strain>
    </source>
</reference>
<reference key="2">
    <citation type="journal article" date="1999" name="Immunopharmacology">
        <title>Hypothemycin inhibits the proliferative response and modulates the production of cytokines during T cell activation.</title>
        <authorList>
            <person name="Camacho R."/>
            <person name="Staruch M.J."/>
            <person name="DaSilva C."/>
            <person name="Koprak S."/>
            <person name="Sewell T."/>
            <person name="Salituro G."/>
            <person name="Dumont F.J."/>
        </authorList>
    </citation>
    <scope>BIOTECHNOLOGY</scope>
</reference>
<reference key="3">
    <citation type="journal article" date="1999" name="Jpn. J. Cancer Res.">
        <title>Antitumor efficacy of hypothemycin, a new Ras-signaling inhibitor.</title>
        <authorList>
            <person name="Tanaka H."/>
            <person name="Nishida K."/>
            <person name="Sugita K."/>
            <person name="Yoshioka T."/>
        </authorList>
    </citation>
    <scope>BIOTECHNOLOGY</scope>
</reference>
<reference key="4">
    <citation type="journal article" date="1999" name="Life Sci.">
        <title>Suppression of oncogenic transformation by hypothemycin associated with accelerated cyclin D1 degradation through ubiquitin-proteasome pathway.</title>
        <authorList>
            <person name="Sonoda H."/>
            <person name="Omi K."/>
            <person name="Hojo K."/>
            <person name="Nishida K."/>
            <person name="Omura S."/>
            <person name="Sugita K."/>
        </authorList>
    </citation>
    <scope>BIOTECHNOLOGY</scope>
</reference>
<reference key="5">
    <citation type="journal article" date="2008" name="J. Struct. Biol.">
        <title>Molecular modeling and crystal structure of ERK2-hypothemycin complexes.</title>
        <authorList>
            <person name="Rastelli G."/>
            <person name="Rosenfeld R."/>
            <person name="Reid R."/>
            <person name="Santi D.V."/>
        </authorList>
    </citation>
    <scope>BIOTECHNOLOGY</scope>
</reference>
<reference key="6">
    <citation type="journal article" date="2010" name="Biol. Pharm. Bull.">
        <title>The resorcylic acid lactone hypothemycin selectively inhibits the mitogen-activated protein kinase kinase-extracellular signal-regulated kinase pathway in cells.</title>
        <authorList>
            <person name="Fukazawa H."/>
            <person name="Ikeda Y."/>
            <person name="Fukuyama M."/>
            <person name="Suzuki T."/>
            <person name="Hori H."/>
            <person name="Okuda T."/>
            <person name="Uehara Y."/>
        </authorList>
    </citation>
    <scope>BIOTECHNOLOGY</scope>
</reference>
<reference key="7">
    <citation type="journal article" date="2010" name="J. Am. Chem. Soc.">
        <title>Enzymatic synthesis of resorcylic acid lactones by cooperation of fungal iterative polyketide synthases involved in hypothemycin biosynthesis.</title>
        <authorList>
            <person name="Zhou H."/>
            <person name="Qiao K."/>
            <person name="Gao Z."/>
            <person name="Meehan M.J."/>
            <person name="Li J.W."/>
            <person name="Zhao X."/>
            <person name="Dorrestein P.C."/>
            <person name="Vederas J.C."/>
            <person name="Tang Y."/>
        </authorList>
    </citation>
    <scope>FUNCTION</scope>
</reference>
<reference key="8">
    <citation type="journal article" date="2013" name="Elife">
        <title>Hypothemycin, a fungal natural product, identifies therapeutic targets in Trypanosoma brucei [corrected].</title>
        <authorList>
            <person name="Nishino M."/>
            <person name="Choy J.W."/>
            <person name="Gushwa N.N."/>
            <person name="Oses-Prieto J.A."/>
            <person name="Koupparis K."/>
            <person name="Burlingame A.L."/>
            <person name="Renslo A.R."/>
            <person name="McKerrow J.H."/>
            <person name="Taunton J."/>
        </authorList>
    </citation>
    <scope>BIOTECHNOLOGY</scope>
</reference>
<reference key="9">
    <citation type="journal article" date="2013" name="J. Agric. Food Chem.">
        <title>Antifungal activity of hypothemycin against Peronophythora litchii in vitro and in vivo.</title>
        <authorList>
            <person name="Xu L."/>
            <person name="Xue J."/>
            <person name="Wu P."/>
            <person name="Wang D."/>
            <person name="Lin L."/>
            <person name="Jiang Y."/>
            <person name="Duan X."/>
            <person name="Wei X."/>
        </authorList>
    </citation>
    <scope>BIOTECHNOLOGY</scope>
</reference>
<reference key="10">
    <citation type="journal article" date="2015" name="Int. Immunopharmacol.">
        <title>Hypothemycin inhibits tumor necrosis factor-alpha production by tristetraprolin-dependent down-regulation of mRNA stability in lipopolysaccharide-stimulated macrophages.</title>
        <authorList>
            <person name="Park K.H."/>
            <person name="Yoon Y.D."/>
            <person name="Kang M.R."/>
            <person name="Yun J."/>
            <person name="Oh S.J."/>
            <person name="Lee C.W."/>
            <person name="Lee M.Y."/>
            <person name="Han S.B."/>
            <person name="Kim Y."/>
            <person name="Kang J.S."/>
        </authorList>
    </citation>
    <scope>BIOTECHNOLOGY</scope>
</reference>
<proteinExistence type="evidence at protein level"/>
<organism>
    <name type="scientific">Hypomyces subiculosus</name>
    <name type="common">Nectria subiculosa</name>
    <dbReference type="NCBI Taxonomy" id="193393"/>
    <lineage>
        <taxon>Eukaryota</taxon>
        <taxon>Fungi</taxon>
        <taxon>Dikarya</taxon>
        <taxon>Ascomycota</taxon>
        <taxon>Pezizomycotina</taxon>
        <taxon>Sordariomycetes</taxon>
        <taxon>Hypocreomycetidae</taxon>
        <taxon>Hypocreales</taxon>
        <taxon>Hypocreaceae</taxon>
        <taxon>Hypomyces</taxon>
    </lineage>
</organism>
<comment type="function">
    <text evidence="6 9">O-methyltransferase; part of the gene cluster that mediates the biosynthesis of hypothemycin, a resorcylic acid lactone (RAL) that irreversibly inhibits a subset of protein kinases with a conserved cysteine in the ATP binding site such as human ERK2 (PubMed:18567690). The first step is performed by both PKSs hmp3 and hmp8 and leads to the production of 7',8'-dehydrozearalenol (DHZ) (PubMed:18567690, PubMed:20222707). The highly reducing PKS hpm8 synthesizes the reduced hexaketide (7S,11S,2E,8E)-7,11-dihydroxy-dodeca-2,8-dienoate, which is transferred downstream to the non-reducing PKS hpm3 (PubMed:20222707). Hpm3 then extends the reduced hexaketide to a nonaketide, after which regioselective cyclization and macrolactonization affords DHZ (PubMed:20222707). The next step is the conversion of DHZ into aigialomycin C and is performed by the O-methyltransferase hmp5, the FAD-binding monooxygenase hmp7, and the cytochrome P450 monooxygenase hmp1 (PubMed:18567690). The wide substrate tolerance of the hmp5 and hmp7 implies that the reactions from DHZ to aigialomycin C can occur in any order (PubMed:18567690). The steps from aigialomycin C to hypothemycin are less well established (PubMed:18567690). The FAD-linked oxidoreductase hmp9 presumably catalyzes oxidation of the C-6' hydroxyl to a ketone (PubMed:18567690). The timing of this oxidation is important, since the resulting enone functional group is a Michael acceptor that can react spontaneously with glutathione, an abundant metabolite in fungal cells (PubMed:18567690). The glutathione S-transferase hmp2 catalyzes cis-trans isomerization of the 7',8' double bond with equilibrium favoring the trans isomer (PubMed:18567690). The hpm6-encoded transporter might preferentially pump hypothemycin out of the cell relative to the trans isomer aigialomycin A. The cis-to-trans isomerization may be coupled with C-4' hydroxylation, since all known hypothemycin analogs containing the enone functional group also have hydroxyl groups at both C-4' and C-5' (PubMed:18567690).</text>
</comment>
<comment type="pathway">
    <text evidence="6">Secondary metabolite biosynthesis.</text>
</comment>
<comment type="disruption phenotype">
    <text evidence="6">Leads to a reduced production of hypothemycin but an increased production of 4-O-desmethylhypothemycin (PubMed:18567690).</text>
</comment>
<comment type="biotechnology">
    <text evidence="3 4 5 7 8 10 11 12">Hypothemycin is an antifungal agent that exhibits excellent activity against Peronophythora litchii, which could be helpful for the storage of harvest litchi fruit (PubMed:24106914). Hypothemycin is a strong inhibitor of a subset of MAP kinases such as human ERK2 (PubMed:18571434, PubMed:20118535, PubMed:26371861). It can therefore be used as an anti-cancer drug thanks to its inhibitory activity of Ras-mediated cellular signals (PubMed:10421424, PubMed:10595743). It can also inhibit Trypanosoma brucei kinase TbCLK1 which is a good candidate as a therapeutic target for African trypanosomiasis (PubMed:23853713). Finally, hypothemycin also has inhibitor activity of T cell activation (PubMed:10598882).</text>
</comment>
<comment type="similarity">
    <text evidence="2">Belongs to the class I-like SAM-binding methyltransferase superfamily. Cation-independent O-methyltransferase family.</text>
</comment>
<protein>
    <recommendedName>
        <fullName evidence="13">O-methyltransferase hmp5</fullName>
        <ecNumber evidence="6">2.1.1.-</ecNumber>
    </recommendedName>
    <alternativeName>
        <fullName evidence="13">Hypothemycin biosynthesis cluster protein hpm5</fullName>
    </alternativeName>
</protein>
<sequence length="398" mass="44285">MSASNGEIVQRIESLLASAKKLQGDDQYGRFGLLKEIDLLYQDVEPPINTFFKQWTSLTFFSCIDIAIKLGLFEHMKGRESITAKELGALVNVDDDVIARVMRVLVASRFVASKGEDAYAHTHKSLVYVKGEHTAVDSFNLISLLAVSYITIPEYLKTRSADELVDIRKTPYACAYGMEGKTFYEVLSTNPDHLDTFNRSMSEPGPEWGMFPFESLRENVLAEPERPFVVDIGGGKGQALLRIQEETGKVFGTSSQLILQERPDVLEQINQDDIAGITKMPYDFHTKQPVKDAHVYFFSQIIHNYPDHVCQDILKQAAGAMGPSSRLLIVEAVLPAQTDVGGDMGAYLIDFVGLAMGGKERTEKEFATLLGTVGLELVKVWHGKARHHAIVEARLKRA</sequence>
<gene>
    <name evidence="13" type="primary">hpm5</name>
</gene>